<proteinExistence type="inferred from homology"/>
<sequence>MTGDWKNRPARVQLQESDLPSSVPPQTGLAFNVWYNKWSQGQSGSTRFVTPYSLDPENDSGITKGDKEGRIHFCLYFAKGMCCLGKNCRYLHHIPEPDDFARLALHSSALDCFGREKFADYRDDMGGVGSFKKPNRVLYVGGITGALNNKTLKPHQIENRVKYKFGKLGELDSVRYVESKNCAFVKFKLQCNSEFTKEAMGNQTLLIPTDKEWDLRKEGTGLLVKWANEDPNPAVRKRELEEQTQETLKAIKQLVASTEGTVNQKRKVEEINEVRDSQANSRERFSIRENAIIDKTILDKLKQRKVTITNTNVAANITVSKPSSVLPLVTQYSSDED</sequence>
<evidence type="ECO:0000250" key="1"/>
<evidence type="ECO:0000255" key="2">
    <source>
        <dbReference type="PROSITE-ProRule" id="PRU00176"/>
    </source>
</evidence>
<evidence type="ECO:0000255" key="3">
    <source>
        <dbReference type="PROSITE-ProRule" id="PRU00723"/>
    </source>
</evidence>
<evidence type="ECO:0000256" key="4">
    <source>
        <dbReference type="SAM" id="MobiDB-lite"/>
    </source>
</evidence>
<evidence type="ECO:0000305" key="5"/>
<name>CWC2_KLULA</name>
<feature type="chain" id="PRO_0000081546" description="Pre-mRNA-splicing factor CWC2">
    <location>
        <begin position="1"/>
        <end position="337"/>
    </location>
</feature>
<feature type="domain" description="RRM" evidence="2">
    <location>
        <begin position="136"/>
        <end position="229"/>
    </location>
</feature>
<feature type="zinc finger region" description="C3H1-type" evidence="3">
    <location>
        <begin position="68"/>
        <end position="95"/>
    </location>
</feature>
<feature type="region of interest" description="Disordered" evidence="4">
    <location>
        <begin position="1"/>
        <end position="23"/>
    </location>
</feature>
<protein>
    <recommendedName>
        <fullName>Pre-mRNA-splicing factor CWC2</fullName>
    </recommendedName>
</protein>
<comment type="function">
    <text evidence="1">Involved in the first step of pre-mRNA splicing. Required for cell growth and cell cycle control. Plays a role in the levels of the U1, U4, U5 and U6 snRNAs and the maintenance of the U4/U6 snRNA complex. May provide the link between the 'nineteen complex' NTC spliceosome protein complex and the spliceosome through the U6 snRNA. Associates predominantly with U6 snRNAs in assembled active spliceosomes. Binds directly to the internal stem-loop (ISL) domain of the U6 snRNA and to the pre-mRNA intron near the 5' splice site during the activation and catalytic phases of the spliceosome cycle (By similarity).</text>
</comment>
<comment type="subunit">
    <text evidence="1">Associated with the spliceosome.</text>
</comment>
<comment type="subcellular location">
    <subcellularLocation>
        <location evidence="1">Nucleus</location>
    </subcellularLocation>
</comment>
<comment type="domain">
    <text evidence="1">The C-terminal RRM domain and the zinc finger motif are necessary for RNA-binding.</text>
</comment>
<comment type="similarity">
    <text evidence="5">Belongs to the RRM CWC2 family.</text>
</comment>
<organism>
    <name type="scientific">Kluyveromyces lactis (strain ATCC 8585 / CBS 2359 / DSM 70799 / NBRC 1267 / NRRL Y-1140 / WM37)</name>
    <name type="common">Yeast</name>
    <name type="synonym">Candida sphaerica</name>
    <dbReference type="NCBI Taxonomy" id="284590"/>
    <lineage>
        <taxon>Eukaryota</taxon>
        <taxon>Fungi</taxon>
        <taxon>Dikarya</taxon>
        <taxon>Ascomycota</taxon>
        <taxon>Saccharomycotina</taxon>
        <taxon>Saccharomycetes</taxon>
        <taxon>Saccharomycetales</taxon>
        <taxon>Saccharomycetaceae</taxon>
        <taxon>Kluyveromyces</taxon>
    </lineage>
</organism>
<keyword id="KW-0131">Cell cycle</keyword>
<keyword id="KW-0479">Metal-binding</keyword>
<keyword id="KW-0507">mRNA processing</keyword>
<keyword id="KW-0508">mRNA splicing</keyword>
<keyword id="KW-0539">Nucleus</keyword>
<keyword id="KW-1185">Reference proteome</keyword>
<keyword id="KW-0694">RNA-binding</keyword>
<keyword id="KW-0747">Spliceosome</keyword>
<keyword id="KW-0862">Zinc</keyword>
<keyword id="KW-0863">Zinc-finger</keyword>
<gene>
    <name type="primary">CWC2</name>
    <name type="ordered locus">KLLA0C15411g</name>
</gene>
<accession>Q6CT50</accession>
<dbReference type="EMBL" id="CR382123">
    <property type="protein sequence ID" value="CAH01740.1"/>
    <property type="molecule type" value="Genomic_DNA"/>
</dbReference>
<dbReference type="RefSeq" id="XP_452889.1">
    <property type="nucleotide sequence ID" value="XM_452889.1"/>
</dbReference>
<dbReference type="SMR" id="Q6CT50"/>
<dbReference type="FunCoup" id="Q6CT50">
    <property type="interactions" value="251"/>
</dbReference>
<dbReference type="STRING" id="284590.Q6CT50"/>
<dbReference type="PaxDb" id="284590-Q6CT50"/>
<dbReference type="KEGG" id="kla:KLLA0_C15411g"/>
<dbReference type="eggNOG" id="KOG0118">
    <property type="taxonomic scope" value="Eukaryota"/>
</dbReference>
<dbReference type="HOGENOM" id="CLU_043308_0_0_1"/>
<dbReference type="InParanoid" id="Q6CT50"/>
<dbReference type="OMA" id="WYNKWSQ"/>
<dbReference type="Proteomes" id="UP000000598">
    <property type="component" value="Chromosome C"/>
</dbReference>
<dbReference type="GO" id="GO:0000974">
    <property type="term" value="C:Prp19 complex"/>
    <property type="evidence" value="ECO:0000250"/>
    <property type="project" value="UniProtKB"/>
</dbReference>
<dbReference type="GO" id="GO:0071006">
    <property type="term" value="C:U2-type catalytic step 1 spliceosome"/>
    <property type="evidence" value="ECO:0007669"/>
    <property type="project" value="TreeGrafter"/>
</dbReference>
<dbReference type="GO" id="GO:0071007">
    <property type="term" value="C:U2-type catalytic step 2 spliceosome"/>
    <property type="evidence" value="ECO:0007669"/>
    <property type="project" value="TreeGrafter"/>
</dbReference>
<dbReference type="GO" id="GO:0036002">
    <property type="term" value="F:pre-mRNA binding"/>
    <property type="evidence" value="ECO:0000250"/>
    <property type="project" value="UniProtKB"/>
</dbReference>
<dbReference type="GO" id="GO:0017070">
    <property type="term" value="F:U6 snRNA binding"/>
    <property type="evidence" value="ECO:0000250"/>
    <property type="project" value="UniProtKB"/>
</dbReference>
<dbReference type="GO" id="GO:0008270">
    <property type="term" value="F:zinc ion binding"/>
    <property type="evidence" value="ECO:0007669"/>
    <property type="project" value="UniProtKB-KW"/>
</dbReference>
<dbReference type="GO" id="GO:0045292">
    <property type="term" value="P:mRNA cis splicing, via spliceosome"/>
    <property type="evidence" value="ECO:0000250"/>
    <property type="project" value="UniProtKB"/>
</dbReference>
<dbReference type="GO" id="GO:0045787">
    <property type="term" value="P:positive regulation of cell cycle"/>
    <property type="evidence" value="ECO:0000250"/>
    <property type="project" value="UniProtKB"/>
</dbReference>
<dbReference type="GO" id="GO:0033120">
    <property type="term" value="P:positive regulation of RNA splicing"/>
    <property type="evidence" value="ECO:0000250"/>
    <property type="project" value="UniProtKB"/>
</dbReference>
<dbReference type="GO" id="GO:0000387">
    <property type="term" value="P:spliceosomal snRNP assembly"/>
    <property type="evidence" value="ECO:0000250"/>
    <property type="project" value="UniProtKB"/>
</dbReference>
<dbReference type="FunFam" id="3.30.70.330:FF:000713">
    <property type="entry name" value="Pre-mRNA-splicing factor CWC2"/>
    <property type="match status" value="1"/>
</dbReference>
<dbReference type="Gene3D" id="3.30.70.330">
    <property type="match status" value="1"/>
</dbReference>
<dbReference type="InterPro" id="IPR039171">
    <property type="entry name" value="Cwc2/Slt11"/>
</dbReference>
<dbReference type="InterPro" id="IPR012677">
    <property type="entry name" value="Nucleotide-bd_a/b_plait_sf"/>
</dbReference>
<dbReference type="InterPro" id="IPR035979">
    <property type="entry name" value="RBD_domain_sf"/>
</dbReference>
<dbReference type="InterPro" id="IPR000504">
    <property type="entry name" value="RRM_dom"/>
</dbReference>
<dbReference type="InterPro" id="IPR032297">
    <property type="entry name" value="Torus"/>
</dbReference>
<dbReference type="InterPro" id="IPR000571">
    <property type="entry name" value="Znf_CCCH"/>
</dbReference>
<dbReference type="InterPro" id="IPR036855">
    <property type="entry name" value="Znf_CCCH_sf"/>
</dbReference>
<dbReference type="PANTHER" id="PTHR14089:SF2">
    <property type="entry name" value="PRE-MRNA-SPLICING FACTOR CWC2"/>
    <property type="match status" value="1"/>
</dbReference>
<dbReference type="PANTHER" id="PTHR14089">
    <property type="entry name" value="PRE-MRNA-SPLICING FACTOR RBM22"/>
    <property type="match status" value="1"/>
</dbReference>
<dbReference type="Pfam" id="PF16131">
    <property type="entry name" value="Torus"/>
    <property type="match status" value="1"/>
</dbReference>
<dbReference type="SUPFAM" id="SSF90229">
    <property type="entry name" value="CCCH zinc finger"/>
    <property type="match status" value="1"/>
</dbReference>
<dbReference type="SUPFAM" id="SSF54928">
    <property type="entry name" value="RNA-binding domain, RBD"/>
    <property type="match status" value="1"/>
</dbReference>
<dbReference type="PROSITE" id="PS50102">
    <property type="entry name" value="RRM"/>
    <property type="match status" value="1"/>
</dbReference>
<dbReference type="PROSITE" id="PS50103">
    <property type="entry name" value="ZF_C3H1"/>
    <property type="match status" value="1"/>
</dbReference>
<reference key="1">
    <citation type="journal article" date="2004" name="Nature">
        <title>Genome evolution in yeasts.</title>
        <authorList>
            <person name="Dujon B."/>
            <person name="Sherman D."/>
            <person name="Fischer G."/>
            <person name="Durrens P."/>
            <person name="Casaregola S."/>
            <person name="Lafontaine I."/>
            <person name="de Montigny J."/>
            <person name="Marck C."/>
            <person name="Neuveglise C."/>
            <person name="Talla E."/>
            <person name="Goffard N."/>
            <person name="Frangeul L."/>
            <person name="Aigle M."/>
            <person name="Anthouard V."/>
            <person name="Babour A."/>
            <person name="Barbe V."/>
            <person name="Barnay S."/>
            <person name="Blanchin S."/>
            <person name="Beckerich J.-M."/>
            <person name="Beyne E."/>
            <person name="Bleykasten C."/>
            <person name="Boisrame A."/>
            <person name="Boyer J."/>
            <person name="Cattolico L."/>
            <person name="Confanioleri F."/>
            <person name="de Daruvar A."/>
            <person name="Despons L."/>
            <person name="Fabre E."/>
            <person name="Fairhead C."/>
            <person name="Ferry-Dumazet H."/>
            <person name="Groppi A."/>
            <person name="Hantraye F."/>
            <person name="Hennequin C."/>
            <person name="Jauniaux N."/>
            <person name="Joyet P."/>
            <person name="Kachouri R."/>
            <person name="Kerrest A."/>
            <person name="Koszul R."/>
            <person name="Lemaire M."/>
            <person name="Lesur I."/>
            <person name="Ma L."/>
            <person name="Muller H."/>
            <person name="Nicaud J.-M."/>
            <person name="Nikolski M."/>
            <person name="Oztas S."/>
            <person name="Ozier-Kalogeropoulos O."/>
            <person name="Pellenz S."/>
            <person name="Potier S."/>
            <person name="Richard G.-F."/>
            <person name="Straub M.-L."/>
            <person name="Suleau A."/>
            <person name="Swennen D."/>
            <person name="Tekaia F."/>
            <person name="Wesolowski-Louvel M."/>
            <person name="Westhof E."/>
            <person name="Wirth B."/>
            <person name="Zeniou-Meyer M."/>
            <person name="Zivanovic Y."/>
            <person name="Bolotin-Fukuhara M."/>
            <person name="Thierry A."/>
            <person name="Bouchier C."/>
            <person name="Caudron B."/>
            <person name="Scarpelli C."/>
            <person name="Gaillardin C."/>
            <person name="Weissenbach J."/>
            <person name="Wincker P."/>
            <person name="Souciet J.-L."/>
        </authorList>
    </citation>
    <scope>NUCLEOTIDE SEQUENCE [LARGE SCALE GENOMIC DNA]</scope>
    <source>
        <strain>ATCC 8585 / CBS 2359 / DSM 70799 / NBRC 1267 / NRRL Y-1140 / WM37</strain>
    </source>
</reference>